<organism>
    <name type="scientific">Acidovorax sp. (strain JS42)</name>
    <dbReference type="NCBI Taxonomy" id="232721"/>
    <lineage>
        <taxon>Bacteria</taxon>
        <taxon>Pseudomonadati</taxon>
        <taxon>Pseudomonadota</taxon>
        <taxon>Betaproteobacteria</taxon>
        <taxon>Burkholderiales</taxon>
        <taxon>Comamonadaceae</taxon>
        <taxon>Acidovorax</taxon>
    </lineage>
</organism>
<protein>
    <recommendedName>
        <fullName evidence="1">Translation initiation factor IF-1 2</fullName>
    </recommendedName>
</protein>
<keyword id="KW-0963">Cytoplasm</keyword>
<keyword id="KW-0396">Initiation factor</keyword>
<keyword id="KW-0648">Protein biosynthesis</keyword>
<keyword id="KW-0694">RNA-binding</keyword>
<keyword id="KW-0699">rRNA-binding</keyword>
<evidence type="ECO:0000255" key="1">
    <source>
        <dbReference type="HAMAP-Rule" id="MF_00075"/>
    </source>
</evidence>
<sequence>MAKEELIEMQGSVTEVLPDSRFRVTLDNGHQLIAYTGGKMRKHHIRILAGDKVSLEMSPYDLTKGRITFRHLAGRGPGPGTGSSSGNR</sequence>
<proteinExistence type="inferred from homology"/>
<reference key="1">
    <citation type="submission" date="2006-12" db="EMBL/GenBank/DDBJ databases">
        <title>Complete sequence of chromosome 1 of Acidovorax sp. JS42.</title>
        <authorList>
            <person name="Copeland A."/>
            <person name="Lucas S."/>
            <person name="Lapidus A."/>
            <person name="Barry K."/>
            <person name="Detter J.C."/>
            <person name="Glavina del Rio T."/>
            <person name="Dalin E."/>
            <person name="Tice H."/>
            <person name="Pitluck S."/>
            <person name="Chertkov O."/>
            <person name="Brettin T."/>
            <person name="Bruce D."/>
            <person name="Han C."/>
            <person name="Tapia R."/>
            <person name="Gilna P."/>
            <person name="Schmutz J."/>
            <person name="Larimer F."/>
            <person name="Land M."/>
            <person name="Hauser L."/>
            <person name="Kyrpides N."/>
            <person name="Kim E."/>
            <person name="Stahl D."/>
            <person name="Richardson P."/>
        </authorList>
    </citation>
    <scope>NUCLEOTIDE SEQUENCE [LARGE SCALE GENOMIC DNA]</scope>
    <source>
        <strain>JS42</strain>
    </source>
</reference>
<name>IF12_ACISJ</name>
<gene>
    <name evidence="1" type="primary">infA2</name>
    <name type="ordered locus">Ajs_1670</name>
</gene>
<dbReference type="EMBL" id="CP000539">
    <property type="protein sequence ID" value="ABM41861.1"/>
    <property type="molecule type" value="Genomic_DNA"/>
</dbReference>
<dbReference type="SMR" id="A1W6I6"/>
<dbReference type="STRING" id="232721.Ajs_1670"/>
<dbReference type="KEGG" id="ajs:Ajs_1670"/>
<dbReference type="eggNOG" id="COG0361">
    <property type="taxonomic scope" value="Bacteria"/>
</dbReference>
<dbReference type="HOGENOM" id="CLU_151267_4_1_4"/>
<dbReference type="Proteomes" id="UP000000645">
    <property type="component" value="Chromosome"/>
</dbReference>
<dbReference type="GO" id="GO:0005829">
    <property type="term" value="C:cytosol"/>
    <property type="evidence" value="ECO:0007669"/>
    <property type="project" value="TreeGrafter"/>
</dbReference>
<dbReference type="GO" id="GO:0043022">
    <property type="term" value="F:ribosome binding"/>
    <property type="evidence" value="ECO:0007669"/>
    <property type="project" value="UniProtKB-UniRule"/>
</dbReference>
<dbReference type="GO" id="GO:0019843">
    <property type="term" value="F:rRNA binding"/>
    <property type="evidence" value="ECO:0007669"/>
    <property type="project" value="UniProtKB-UniRule"/>
</dbReference>
<dbReference type="GO" id="GO:0003743">
    <property type="term" value="F:translation initiation factor activity"/>
    <property type="evidence" value="ECO:0007669"/>
    <property type="project" value="UniProtKB-UniRule"/>
</dbReference>
<dbReference type="CDD" id="cd04451">
    <property type="entry name" value="S1_IF1"/>
    <property type="match status" value="1"/>
</dbReference>
<dbReference type="FunFam" id="2.40.50.140:FF:000002">
    <property type="entry name" value="Translation initiation factor IF-1"/>
    <property type="match status" value="1"/>
</dbReference>
<dbReference type="Gene3D" id="2.40.50.140">
    <property type="entry name" value="Nucleic acid-binding proteins"/>
    <property type="match status" value="1"/>
</dbReference>
<dbReference type="HAMAP" id="MF_00075">
    <property type="entry name" value="IF_1"/>
    <property type="match status" value="1"/>
</dbReference>
<dbReference type="InterPro" id="IPR012340">
    <property type="entry name" value="NA-bd_OB-fold"/>
</dbReference>
<dbReference type="InterPro" id="IPR006196">
    <property type="entry name" value="RNA-binding_domain_S1_IF1"/>
</dbReference>
<dbReference type="InterPro" id="IPR004368">
    <property type="entry name" value="TIF_IF1"/>
</dbReference>
<dbReference type="NCBIfam" id="TIGR00008">
    <property type="entry name" value="infA"/>
    <property type="match status" value="1"/>
</dbReference>
<dbReference type="PANTHER" id="PTHR33370">
    <property type="entry name" value="TRANSLATION INITIATION FACTOR IF-1, CHLOROPLASTIC"/>
    <property type="match status" value="1"/>
</dbReference>
<dbReference type="PANTHER" id="PTHR33370:SF1">
    <property type="entry name" value="TRANSLATION INITIATION FACTOR IF-1, CHLOROPLASTIC"/>
    <property type="match status" value="1"/>
</dbReference>
<dbReference type="Pfam" id="PF01176">
    <property type="entry name" value="eIF-1a"/>
    <property type="match status" value="1"/>
</dbReference>
<dbReference type="SUPFAM" id="SSF50249">
    <property type="entry name" value="Nucleic acid-binding proteins"/>
    <property type="match status" value="1"/>
</dbReference>
<dbReference type="PROSITE" id="PS50832">
    <property type="entry name" value="S1_IF1_TYPE"/>
    <property type="match status" value="1"/>
</dbReference>
<accession>A1W6I6</accession>
<comment type="function">
    <text evidence="1">One of the essential components for the initiation of protein synthesis. Stabilizes the binding of IF-2 and IF-3 on the 30S subunit to which N-formylmethionyl-tRNA(fMet) subsequently binds. Helps modulate mRNA selection, yielding the 30S pre-initiation complex (PIC). Upon addition of the 50S ribosomal subunit IF-1, IF-2 and IF-3 are released leaving the mature 70S translation initiation complex.</text>
</comment>
<comment type="subunit">
    <text evidence="1">Component of the 30S ribosomal translation pre-initiation complex which assembles on the 30S ribosome in the order IF-2 and IF-3, IF-1 and N-formylmethionyl-tRNA(fMet); mRNA recruitment can occur at any time during PIC assembly.</text>
</comment>
<comment type="subcellular location">
    <subcellularLocation>
        <location evidence="1">Cytoplasm</location>
    </subcellularLocation>
</comment>
<comment type="similarity">
    <text evidence="1">Belongs to the IF-1 family.</text>
</comment>
<feature type="chain" id="PRO_0000338748" description="Translation initiation factor IF-1 2">
    <location>
        <begin position="1"/>
        <end position="88"/>
    </location>
</feature>
<feature type="domain" description="S1-like" evidence="1">
    <location>
        <begin position="1"/>
        <end position="72"/>
    </location>
</feature>